<name>AMO2_ARATH</name>
<feature type="signal peptide" evidence="4">
    <location>
        <begin position="1"/>
        <end position="22"/>
    </location>
</feature>
<feature type="chain" id="PRO_5009973652" description="Primary amine oxidase 2">
    <location>
        <begin position="23"/>
        <end position="662"/>
    </location>
</feature>
<feature type="active site" description="Proton acceptor" evidence="1">
    <location>
        <position position="323"/>
    </location>
</feature>
<feature type="active site" description="Schiff-base intermediate with substrate; via topaquinone" evidence="1">
    <location>
        <position position="408"/>
    </location>
</feature>
<feature type="binding site" evidence="1">
    <location>
        <begin position="321"/>
        <end position="332"/>
    </location>
    <ligand>
        <name>substrate</name>
    </ligand>
</feature>
<feature type="binding site" evidence="2">
    <location>
        <begin position="405"/>
        <end position="410"/>
    </location>
    <ligand>
        <name>substrate</name>
    </ligand>
</feature>
<feature type="binding site" evidence="3">
    <location>
        <position position="464"/>
    </location>
    <ligand>
        <name>Cu cation</name>
        <dbReference type="ChEBI" id="CHEBI:23378"/>
    </ligand>
</feature>
<feature type="binding site" evidence="3">
    <location>
        <position position="466"/>
    </location>
    <ligand>
        <name>Cu cation</name>
        <dbReference type="ChEBI" id="CHEBI:23378"/>
    </ligand>
</feature>
<feature type="binding site" evidence="3">
    <location>
        <position position="473"/>
    </location>
    <ligand>
        <name>Mn(2+)</name>
        <dbReference type="ChEBI" id="CHEBI:29035"/>
    </ligand>
</feature>
<feature type="binding site" evidence="3">
    <location>
        <position position="475"/>
    </location>
    <ligand>
        <name>Mn(2+)</name>
        <dbReference type="ChEBI" id="CHEBI:29035"/>
    </ligand>
</feature>
<feature type="binding site" evidence="3">
    <location>
        <position position="602"/>
    </location>
    <ligand>
        <name>Mn(2+)</name>
        <dbReference type="ChEBI" id="CHEBI:29035"/>
    </ligand>
</feature>
<feature type="binding site" evidence="3">
    <location>
        <position position="603"/>
    </location>
    <ligand>
        <name>Mn(2+)</name>
        <dbReference type="ChEBI" id="CHEBI:29035"/>
    </ligand>
</feature>
<feature type="binding site" evidence="3">
    <location>
        <position position="613"/>
    </location>
    <ligand>
        <name>Cu cation</name>
        <dbReference type="ChEBI" id="CHEBI:23378"/>
    </ligand>
</feature>
<feature type="modified residue" description="2',4',5'-topaquinone" evidence="3">
    <location>
        <position position="408"/>
    </location>
</feature>
<feature type="glycosylation site" description="N-linked (GlcNAc...) asparagine" evidence="3">
    <location>
        <position position="154"/>
    </location>
</feature>
<feature type="glycosylation site" description="N-linked (GlcNAc...) asparagine" evidence="3">
    <location>
        <position position="568"/>
    </location>
</feature>
<feature type="disulfide bond" evidence="3">
    <location>
        <begin position="342"/>
        <end position="368"/>
    </location>
</feature>
<evidence type="ECO:0000250" key="1">
    <source>
        <dbReference type="UniProtKB" id="P12807"/>
    </source>
</evidence>
<evidence type="ECO:0000250" key="2">
    <source>
        <dbReference type="UniProtKB" id="P46883"/>
    </source>
</evidence>
<evidence type="ECO:0000250" key="3">
    <source>
        <dbReference type="UniProtKB" id="Q43077"/>
    </source>
</evidence>
<evidence type="ECO:0000255" key="4"/>
<evidence type="ECO:0000305" key="5"/>
<evidence type="ECO:0000312" key="6">
    <source>
        <dbReference type="EMBL" id="AAG60154.1"/>
    </source>
</evidence>
<sequence length="662" mass="75363">MSQLLLFTILVFSSVFVIGSLSFIPPPHPFDPLTEIELNLVRNIINERYPIGLEHRFTFQYVGLNEPDKSLVLSWVSSQYHNVKSPPRQAFVIARDHGKTREIVVDFASQAIVSEKIHVGNGYPMLTIDEQQATSELVLKFKPFRDSIRRRGLNVSEVVVTTSTMGWFGEAKPERLIKKRPFYLNGSVNTYLRPIEGMTIIVNLDQMKVTKFRDRFTSPLPNAKGTEFRISKLKPPFGPSLQNAVLFQSEGPGFKIDGHTNRWANWEFHMSFDVRAGLVISLASIFDMDVNKYRQVLYKGHLSEIFVPYMDPSEDWYFRTFFDCGEFGCGQYAVSLEPYTDCPGNAAFMDGVFASQDGTPIKITNVMCIFEKYAGDIMWRHTEIEIPGLKVRPDVSLVVRMVTTVGNYDYIVDYEFKPSGSIKIGVGLTGVLEVKPVKYVNTSEIKEDDIHGTIVADNTIGVNHDHFVTYRLDLDIDGTDNSFVRSELVTKRTPKSVNTPRKSYWTTKRLKAEELLVVNPSRKTKHGNEVGYRLLHGPASEGPLLAQDDYPQIRAAFTNYNVWITPYNNTEVWASGLYADRSQGDDTLAVWSQRNRKIEKTDIVMWYTVGFHHVPCQEDFPTMPTLFGGFELRPTNFFEQNPDLKTKPIKLNTTPTCTARND</sequence>
<keyword id="KW-0186">Copper</keyword>
<keyword id="KW-1015">Disulfide bond</keyword>
<keyword id="KW-0325">Glycoprotein</keyword>
<keyword id="KW-0464">Manganese</keyword>
<keyword id="KW-0479">Metal-binding</keyword>
<keyword id="KW-0560">Oxidoreductase</keyword>
<keyword id="KW-1185">Reference proteome</keyword>
<keyword id="KW-0732">Signal</keyword>
<keyword id="KW-0801">TPQ</keyword>
<dbReference type="EC" id="1.4.3.21" evidence="1"/>
<dbReference type="EMBL" id="AC074360">
    <property type="protein sequence ID" value="AAG60154.1"/>
    <property type="status" value="ALT_SEQ"/>
    <property type="molecule type" value="Genomic_DNA"/>
</dbReference>
<dbReference type="EMBL" id="CP002684">
    <property type="protein sequence ID" value="AEE31382.1"/>
    <property type="status" value="ALT_SEQ"/>
    <property type="molecule type" value="Genomic_DNA"/>
</dbReference>
<dbReference type="SMR" id="P0DO00"/>
<dbReference type="FunCoup" id="P0DO00">
    <property type="interactions" value="20"/>
</dbReference>
<dbReference type="STRING" id="3702.P0DO00"/>
<dbReference type="GlyGen" id="P0DO00">
    <property type="glycosylation" value="2 sites"/>
</dbReference>
<dbReference type="PaxDb" id="3702-AT1G31670.1"/>
<dbReference type="ProteomicsDB" id="244986"/>
<dbReference type="Araport" id="AT1G31672"/>
<dbReference type="TAIR" id="AT1G31672"/>
<dbReference type="eggNOG" id="KOG1186">
    <property type="taxonomic scope" value="Eukaryota"/>
</dbReference>
<dbReference type="InParanoid" id="P0DO00"/>
<dbReference type="PRO" id="PR:P0DO00"/>
<dbReference type="Proteomes" id="UP000006548">
    <property type="component" value="Chromosome 1"/>
</dbReference>
<dbReference type="ExpressionAtlas" id="P0DO00">
    <property type="expression patterns" value="baseline and differential"/>
</dbReference>
<dbReference type="GO" id="GO:0005507">
    <property type="term" value="F:copper ion binding"/>
    <property type="evidence" value="ECO:0000318"/>
    <property type="project" value="GO_Central"/>
</dbReference>
<dbReference type="GO" id="GO:0008131">
    <property type="term" value="F:primary methylamine oxidase activity"/>
    <property type="evidence" value="ECO:0000318"/>
    <property type="project" value="GO_Central"/>
</dbReference>
<dbReference type="GO" id="GO:0048038">
    <property type="term" value="F:quinone binding"/>
    <property type="evidence" value="ECO:0007669"/>
    <property type="project" value="InterPro"/>
</dbReference>
<dbReference type="GO" id="GO:0009308">
    <property type="term" value="P:amine metabolic process"/>
    <property type="evidence" value="ECO:0000318"/>
    <property type="project" value="GO_Central"/>
</dbReference>
<dbReference type="GO" id="GO:0009753">
    <property type="term" value="P:response to jasmonic acid"/>
    <property type="evidence" value="ECO:0000318"/>
    <property type="project" value="GO_Central"/>
</dbReference>
<dbReference type="FunFam" id="2.70.98.20:FF:000004">
    <property type="entry name" value="Amine oxidase"/>
    <property type="match status" value="1"/>
</dbReference>
<dbReference type="FunFam" id="3.10.450.40:FF:000005">
    <property type="entry name" value="Amine oxidase"/>
    <property type="match status" value="1"/>
</dbReference>
<dbReference type="FunFam" id="3.10.450.40:FF:000012">
    <property type="entry name" value="Amine oxidase"/>
    <property type="match status" value="1"/>
</dbReference>
<dbReference type="Gene3D" id="3.10.450.40">
    <property type="match status" value="2"/>
</dbReference>
<dbReference type="Gene3D" id="2.70.98.20">
    <property type="entry name" value="Copper amine oxidase, catalytic domain"/>
    <property type="match status" value="1"/>
</dbReference>
<dbReference type="InterPro" id="IPR049947">
    <property type="entry name" value="Cu_Am_Ox_Cu-bd"/>
</dbReference>
<dbReference type="InterPro" id="IPR049948">
    <property type="entry name" value="Cu_Am_ox_TPQ-bd"/>
</dbReference>
<dbReference type="InterPro" id="IPR000269">
    <property type="entry name" value="Cu_amine_oxidase"/>
</dbReference>
<dbReference type="InterPro" id="IPR015798">
    <property type="entry name" value="Cu_amine_oxidase_C"/>
</dbReference>
<dbReference type="InterPro" id="IPR036460">
    <property type="entry name" value="Cu_amine_oxidase_C_sf"/>
</dbReference>
<dbReference type="InterPro" id="IPR016182">
    <property type="entry name" value="Cu_amine_oxidase_N-reg"/>
</dbReference>
<dbReference type="InterPro" id="IPR015800">
    <property type="entry name" value="Cu_amine_oxidase_N2"/>
</dbReference>
<dbReference type="InterPro" id="IPR015802">
    <property type="entry name" value="Cu_amine_oxidase_N3"/>
</dbReference>
<dbReference type="PANTHER" id="PTHR10638:SF87">
    <property type="entry name" value="AMINE OXIDASE [COPPER-CONTAINING] ALPHA 2, PEROXISOMAL-RELATED"/>
    <property type="match status" value="1"/>
</dbReference>
<dbReference type="PANTHER" id="PTHR10638">
    <property type="entry name" value="COPPER AMINE OXIDASE"/>
    <property type="match status" value="1"/>
</dbReference>
<dbReference type="Pfam" id="PF01179">
    <property type="entry name" value="Cu_amine_oxid"/>
    <property type="match status" value="1"/>
</dbReference>
<dbReference type="Pfam" id="PF02727">
    <property type="entry name" value="Cu_amine_oxidN2"/>
    <property type="match status" value="1"/>
</dbReference>
<dbReference type="Pfam" id="PF02728">
    <property type="entry name" value="Cu_amine_oxidN3"/>
    <property type="match status" value="1"/>
</dbReference>
<dbReference type="SUPFAM" id="SSF49998">
    <property type="entry name" value="Amine oxidase catalytic domain"/>
    <property type="match status" value="1"/>
</dbReference>
<dbReference type="SUPFAM" id="SSF54416">
    <property type="entry name" value="Amine oxidase N-terminal region"/>
    <property type="match status" value="2"/>
</dbReference>
<dbReference type="PROSITE" id="PS01164">
    <property type="entry name" value="COPPER_AMINE_OXID_1"/>
    <property type="match status" value="1"/>
</dbReference>
<dbReference type="PROSITE" id="PS01165">
    <property type="entry name" value="COPPER_AMINE_OXID_2"/>
    <property type="match status" value="1"/>
</dbReference>
<accession>P0DO00</accession>
<accession>Q9C6V7</accession>
<gene>
    <name evidence="5" type="ordered locus">At1g31672</name>
    <name evidence="6" type="ORF">F27M3.13</name>
</gene>
<organism>
    <name type="scientific">Arabidopsis thaliana</name>
    <name type="common">Mouse-ear cress</name>
    <dbReference type="NCBI Taxonomy" id="3702"/>
    <lineage>
        <taxon>Eukaryota</taxon>
        <taxon>Viridiplantae</taxon>
        <taxon>Streptophyta</taxon>
        <taxon>Embryophyta</taxon>
        <taxon>Tracheophyta</taxon>
        <taxon>Spermatophyta</taxon>
        <taxon>Magnoliopsida</taxon>
        <taxon>eudicotyledons</taxon>
        <taxon>Gunneridae</taxon>
        <taxon>Pentapetalae</taxon>
        <taxon>rosids</taxon>
        <taxon>malvids</taxon>
        <taxon>Brassicales</taxon>
        <taxon>Brassicaceae</taxon>
        <taxon>Camelineae</taxon>
        <taxon>Arabidopsis</taxon>
    </lineage>
</organism>
<proteinExistence type="inferred from homology"/>
<reference key="1">
    <citation type="journal article" date="2000" name="Nature">
        <title>Sequence and analysis of chromosome 1 of the plant Arabidopsis thaliana.</title>
        <authorList>
            <person name="Theologis A."/>
            <person name="Ecker J.R."/>
            <person name="Palm C.J."/>
            <person name="Federspiel N.A."/>
            <person name="Kaul S."/>
            <person name="White O."/>
            <person name="Alonso J."/>
            <person name="Altafi H."/>
            <person name="Araujo R."/>
            <person name="Bowman C.L."/>
            <person name="Brooks S.Y."/>
            <person name="Buehler E."/>
            <person name="Chan A."/>
            <person name="Chao Q."/>
            <person name="Chen H."/>
            <person name="Cheuk R.F."/>
            <person name="Chin C.W."/>
            <person name="Chung M.K."/>
            <person name="Conn L."/>
            <person name="Conway A.B."/>
            <person name="Conway A.R."/>
            <person name="Creasy T.H."/>
            <person name="Dewar K."/>
            <person name="Dunn P."/>
            <person name="Etgu P."/>
            <person name="Feldblyum T.V."/>
            <person name="Feng J.-D."/>
            <person name="Fong B."/>
            <person name="Fujii C.Y."/>
            <person name="Gill J.E."/>
            <person name="Goldsmith A.D."/>
            <person name="Haas B."/>
            <person name="Hansen N.F."/>
            <person name="Hughes B."/>
            <person name="Huizar L."/>
            <person name="Hunter J.L."/>
            <person name="Jenkins J."/>
            <person name="Johnson-Hopson C."/>
            <person name="Khan S."/>
            <person name="Khaykin E."/>
            <person name="Kim C.J."/>
            <person name="Koo H.L."/>
            <person name="Kremenetskaia I."/>
            <person name="Kurtz D.B."/>
            <person name="Kwan A."/>
            <person name="Lam B."/>
            <person name="Langin-Hooper S."/>
            <person name="Lee A."/>
            <person name="Lee J.M."/>
            <person name="Lenz C.A."/>
            <person name="Li J.H."/>
            <person name="Li Y.-P."/>
            <person name="Lin X."/>
            <person name="Liu S.X."/>
            <person name="Liu Z.A."/>
            <person name="Luros J.S."/>
            <person name="Maiti R."/>
            <person name="Marziali A."/>
            <person name="Militscher J."/>
            <person name="Miranda M."/>
            <person name="Nguyen M."/>
            <person name="Nierman W.C."/>
            <person name="Osborne B.I."/>
            <person name="Pai G."/>
            <person name="Peterson J."/>
            <person name="Pham P.K."/>
            <person name="Rizzo M."/>
            <person name="Rooney T."/>
            <person name="Rowley D."/>
            <person name="Sakano H."/>
            <person name="Salzberg S.L."/>
            <person name="Schwartz J.R."/>
            <person name="Shinn P."/>
            <person name="Southwick A.M."/>
            <person name="Sun H."/>
            <person name="Tallon L.J."/>
            <person name="Tambunga G."/>
            <person name="Toriumi M.J."/>
            <person name="Town C.D."/>
            <person name="Utterback T."/>
            <person name="Van Aken S."/>
            <person name="Vaysberg M."/>
            <person name="Vysotskaia V.S."/>
            <person name="Walker M."/>
            <person name="Wu D."/>
            <person name="Yu G."/>
            <person name="Fraser C.M."/>
            <person name="Venter J.C."/>
            <person name="Davis R.W."/>
        </authorList>
    </citation>
    <scope>NUCLEOTIDE SEQUENCE [LARGE SCALE GENOMIC DNA]</scope>
    <source>
        <strain>cv. Columbia</strain>
    </source>
</reference>
<reference key="2">
    <citation type="journal article" date="2017" name="Plant J.">
        <title>Araport11: a complete reannotation of the Arabidopsis thaliana reference genome.</title>
        <authorList>
            <person name="Cheng C.Y."/>
            <person name="Krishnakumar V."/>
            <person name="Chan A.P."/>
            <person name="Thibaud-Nissen F."/>
            <person name="Schobel S."/>
            <person name="Town C.D."/>
        </authorList>
    </citation>
    <scope>GENOME REANNOTATION</scope>
    <source>
        <strain>cv. Columbia</strain>
    </source>
</reference>
<comment type="catalytic activity">
    <reaction evidence="1">
        <text>a primary methyl amine + O2 + H2O = an aldehyde + H2O2 + NH4(+)</text>
        <dbReference type="Rhea" id="RHEA:16153"/>
        <dbReference type="ChEBI" id="CHEBI:15377"/>
        <dbReference type="ChEBI" id="CHEBI:15379"/>
        <dbReference type="ChEBI" id="CHEBI:16240"/>
        <dbReference type="ChEBI" id="CHEBI:17478"/>
        <dbReference type="ChEBI" id="CHEBI:28938"/>
        <dbReference type="ChEBI" id="CHEBI:228804"/>
        <dbReference type="EC" id="1.4.3.21"/>
    </reaction>
</comment>
<comment type="cofactor">
    <cofactor evidence="3">
        <name>Cu cation</name>
        <dbReference type="ChEBI" id="CHEBI:23378"/>
    </cofactor>
    <text evidence="3">Binds 1 copper ion per subunit.</text>
</comment>
<comment type="cofactor">
    <cofactor evidence="3">
        <name>Mn(2+)</name>
        <dbReference type="ChEBI" id="CHEBI:29035"/>
    </cofactor>
    <text evidence="3">Binds 1 Mn(2+) ion per subunit.</text>
</comment>
<comment type="cofactor">
    <cofactor evidence="3">
        <name>L-topaquinone</name>
        <dbReference type="ChEBI" id="CHEBI:79027"/>
    </cofactor>
    <text evidence="3">Contains 1 topaquinone per subunit.</text>
</comment>
<comment type="subunit">
    <text evidence="3">Homodimer.</text>
</comment>
<comment type="PTM">
    <text evidence="3">Topaquinone (TPQ) is generated by copper-dependent autoxidation of a specific tyrosyl residue.</text>
</comment>
<comment type="similarity">
    <text evidence="5">Belongs to the copper/topaquinone oxidase family.</text>
</comment>
<comment type="sequence caution" evidence="5">
    <conflict type="erroneous gene model prediction">
        <sequence resource="EMBL-CDS" id="AAG60154"/>
    </conflict>
    <text>The predicted gene At1g31670 has been split into 2 genes: At1g31670 and At1g31672.</text>
</comment>
<comment type="sequence caution" evidence="5">
    <conflict type="erroneous gene model prediction">
        <sequence resource="EMBL-CDS" id="AEE31382"/>
    </conflict>
    <text>The predicted gene At1g31670 has been split into 2 genes: At1g31670 and At1g31672.</text>
</comment>
<protein>
    <recommendedName>
        <fullName>Primary amine oxidase 2</fullName>
        <ecNumber evidence="1">1.4.3.21</ecNumber>
    </recommendedName>
    <alternativeName>
        <fullName>Amine oxidase [copper-containing] 2</fullName>
    </alternativeName>
</protein>